<gene>
    <name type="primary">rpc82</name>
    <name type="synonym">rpc3</name>
    <name type="ORF">AFUA_5G04200</name>
</gene>
<feature type="chain" id="PRO_0000351024" description="DNA-directed RNA polymerase III subunit rpc3">
    <location>
        <begin position="1"/>
        <end position="629"/>
    </location>
</feature>
<feature type="region of interest" description="Disordered" evidence="2">
    <location>
        <begin position="136"/>
        <end position="164"/>
    </location>
</feature>
<feature type="region of interest" description="Disordered" evidence="2">
    <location>
        <begin position="247"/>
        <end position="294"/>
    </location>
</feature>
<feature type="region of interest" description="Disordered" evidence="2">
    <location>
        <begin position="373"/>
        <end position="420"/>
    </location>
</feature>
<feature type="region of interest" description="Leucine-zipper">
    <location>
        <begin position="556"/>
        <end position="577"/>
    </location>
</feature>
<feature type="compositionally biased region" description="Basic and acidic residues" evidence="2">
    <location>
        <begin position="257"/>
        <end position="268"/>
    </location>
</feature>
<feature type="compositionally biased region" description="Acidic residues" evidence="2">
    <location>
        <begin position="272"/>
        <end position="293"/>
    </location>
</feature>
<feature type="compositionally biased region" description="Polar residues" evidence="2">
    <location>
        <begin position="374"/>
        <end position="388"/>
    </location>
</feature>
<feature type="compositionally biased region" description="Basic and acidic residues" evidence="2">
    <location>
        <begin position="389"/>
        <end position="409"/>
    </location>
</feature>
<sequence length="629" mass="71709">MTSQFAAELCELLVEENFGELFGRIFATLSRYDRLNLPRLKAYSELPNRQLLPALAAMIQQHLVYHYTSYDDGVTYYEANMQSAYYLVRSGKILEFVEERLGKYAATVLSTIMYLGHAQVSYLETLPELTSEAVKANGVPEEHGEHEEDEEQSNGLNGEHSNEQPELLHPTLKALAAHGYIIRVREAQFQSHADNILDAERAIRSKPEMKALKGKRLEEAVIEGTLGLLKERTDGDLTRGLIVHGVPRGAKRKHSSRRADEPNKKCRTDFASVDENDEHDEEEENEWSDDEMGYDTTPMEVSARELYATVSERETEQGVSPATAKVYECLLRRIEYQTHQCRDTAEIPREGEEGEQYSVPIALSALAEDVNPQLDLSSSTGPMDSSQPDGRRGKRPWDGDVEGTNHEEANGLSSGGSGGNRTFEIDQHLSLLAQPPHNLTSKRMVSGLITWTVEFRHLARKLRHLELERMIEARYGDVALRVVRVLHAKGKLDEKRLQEISLLPFKDLRQVLASMQAGGFVDLQEVPRDAQRQPSRTIYLWYYDPDRICNSVLQDTYKAMSRCLQRLRFERSRIKDFLEKTERSDVKGNEQRFLSEPELVLLEQWRAKEALLLGEVARLDEMVAVMRDY</sequence>
<comment type="function">
    <text evidence="1">DNA-dependent RNA polymerase catalyzes the transcription of DNA into RNA using the four ribonucleoside triphosphates as substrates. Specific core component of RNA polymerase III which synthesizes small RNAs, such as 5S rRNA and tRNAs (By similarity).</text>
</comment>
<comment type="subunit">
    <text evidence="1">Component of the RNA polymerase III (Pol III) complex consisting of 17 subunits.</text>
</comment>
<comment type="subcellular location">
    <subcellularLocation>
        <location evidence="1">Nucleus</location>
    </subcellularLocation>
</comment>
<comment type="similarity">
    <text evidence="3">Belongs to the RNA polymerase beta chain family.</text>
</comment>
<accession>Q4WEU2</accession>
<evidence type="ECO:0000250" key="1"/>
<evidence type="ECO:0000256" key="2">
    <source>
        <dbReference type="SAM" id="MobiDB-lite"/>
    </source>
</evidence>
<evidence type="ECO:0000305" key="3"/>
<organism>
    <name type="scientific">Aspergillus fumigatus (strain ATCC MYA-4609 / CBS 101355 / FGSC A1100 / Af293)</name>
    <name type="common">Neosartorya fumigata</name>
    <dbReference type="NCBI Taxonomy" id="330879"/>
    <lineage>
        <taxon>Eukaryota</taxon>
        <taxon>Fungi</taxon>
        <taxon>Dikarya</taxon>
        <taxon>Ascomycota</taxon>
        <taxon>Pezizomycotina</taxon>
        <taxon>Eurotiomycetes</taxon>
        <taxon>Eurotiomycetidae</taxon>
        <taxon>Eurotiales</taxon>
        <taxon>Aspergillaceae</taxon>
        <taxon>Aspergillus</taxon>
        <taxon>Aspergillus subgen. Fumigati</taxon>
    </lineage>
</organism>
<keyword id="KW-0240">DNA-directed RNA polymerase</keyword>
<keyword id="KW-0539">Nucleus</keyword>
<keyword id="KW-1185">Reference proteome</keyword>
<keyword id="KW-0804">Transcription</keyword>
<keyword id="KW-0862">Zinc</keyword>
<proteinExistence type="inferred from homology"/>
<name>RPC3_ASPFU</name>
<protein>
    <recommendedName>
        <fullName>DNA-directed RNA polymerase III subunit rpc3</fullName>
        <shortName>RNA polymerase III subunit C3</shortName>
    </recommendedName>
</protein>
<dbReference type="EMBL" id="AAHF01000011">
    <property type="protein sequence ID" value="EAL85885.1"/>
    <property type="molecule type" value="Genomic_DNA"/>
</dbReference>
<dbReference type="RefSeq" id="XP_747923.1">
    <property type="nucleotide sequence ID" value="XM_742830.1"/>
</dbReference>
<dbReference type="SMR" id="Q4WEU2"/>
<dbReference type="STRING" id="330879.Q4WEU2"/>
<dbReference type="EnsemblFungi" id="EAL85885">
    <property type="protein sequence ID" value="EAL85885"/>
    <property type="gene ID" value="AFUA_5G04200"/>
</dbReference>
<dbReference type="GeneID" id="3505557"/>
<dbReference type="KEGG" id="afm:AFUA_5G04200"/>
<dbReference type="eggNOG" id="KOG2587">
    <property type="taxonomic scope" value="Eukaryota"/>
</dbReference>
<dbReference type="HOGENOM" id="CLU_023294_0_0_1"/>
<dbReference type="InParanoid" id="Q4WEU2"/>
<dbReference type="OMA" id="KHRFVRH"/>
<dbReference type="OrthoDB" id="272392at2759"/>
<dbReference type="Proteomes" id="UP000002530">
    <property type="component" value="Chromosome 5"/>
</dbReference>
<dbReference type="GO" id="GO:0005666">
    <property type="term" value="C:RNA polymerase III complex"/>
    <property type="evidence" value="ECO:0000318"/>
    <property type="project" value="GO_Central"/>
</dbReference>
<dbReference type="GO" id="GO:0003697">
    <property type="term" value="F:single-stranded DNA binding"/>
    <property type="evidence" value="ECO:0007669"/>
    <property type="project" value="InterPro"/>
</dbReference>
<dbReference type="GO" id="GO:0006351">
    <property type="term" value="P:DNA-templated transcription"/>
    <property type="evidence" value="ECO:0007669"/>
    <property type="project" value="InterPro"/>
</dbReference>
<dbReference type="FunFam" id="1.10.10.10:FF:000362">
    <property type="entry name" value="DNA-directed RNA polymerase III subunit rpc3"/>
    <property type="match status" value="1"/>
</dbReference>
<dbReference type="FunFam" id="1.10.10.10:FF:000696">
    <property type="entry name" value="DNA-directed RNA polymerase III subunit rpc3"/>
    <property type="match status" value="1"/>
</dbReference>
<dbReference type="Gene3D" id="1.10.10.10">
    <property type="entry name" value="Winged helix-like DNA-binding domain superfamily/Winged helix DNA-binding domain"/>
    <property type="match status" value="2"/>
</dbReference>
<dbReference type="InterPro" id="IPR055207">
    <property type="entry name" value="POLR3C_WHD"/>
</dbReference>
<dbReference type="InterPro" id="IPR013197">
    <property type="entry name" value="RNA_pol_III_RPC82-rel_HTH"/>
</dbReference>
<dbReference type="InterPro" id="IPR008806">
    <property type="entry name" value="RNA_pol_III_Rpc82_C"/>
</dbReference>
<dbReference type="InterPro" id="IPR039748">
    <property type="entry name" value="RPC3"/>
</dbReference>
<dbReference type="InterPro" id="IPR036388">
    <property type="entry name" value="WH-like_DNA-bd_sf"/>
</dbReference>
<dbReference type="InterPro" id="IPR036390">
    <property type="entry name" value="WH_DNA-bd_sf"/>
</dbReference>
<dbReference type="PANTHER" id="PTHR12949:SF0">
    <property type="entry name" value="DNA-DIRECTED RNA POLYMERASE III SUBUNIT RPC3"/>
    <property type="match status" value="1"/>
</dbReference>
<dbReference type="PANTHER" id="PTHR12949">
    <property type="entry name" value="RNA POLYMERASE III DNA DIRECTED -RELATED"/>
    <property type="match status" value="1"/>
</dbReference>
<dbReference type="Pfam" id="PF08221">
    <property type="entry name" value="HTH_9"/>
    <property type="match status" value="1"/>
</dbReference>
<dbReference type="Pfam" id="PF22536">
    <property type="entry name" value="POLR3C_WHD"/>
    <property type="match status" value="1"/>
</dbReference>
<dbReference type="Pfam" id="PF05645">
    <property type="entry name" value="RNA_pol_Rpc82"/>
    <property type="match status" value="1"/>
</dbReference>
<dbReference type="SUPFAM" id="SSF46785">
    <property type="entry name" value="Winged helix' DNA-binding domain"/>
    <property type="match status" value="1"/>
</dbReference>
<reference key="1">
    <citation type="journal article" date="2005" name="Nature">
        <title>Genomic sequence of the pathogenic and allergenic filamentous fungus Aspergillus fumigatus.</title>
        <authorList>
            <person name="Nierman W.C."/>
            <person name="Pain A."/>
            <person name="Anderson M.J."/>
            <person name="Wortman J.R."/>
            <person name="Kim H.S."/>
            <person name="Arroyo J."/>
            <person name="Berriman M."/>
            <person name="Abe K."/>
            <person name="Archer D.B."/>
            <person name="Bermejo C."/>
            <person name="Bennett J.W."/>
            <person name="Bowyer P."/>
            <person name="Chen D."/>
            <person name="Collins M."/>
            <person name="Coulsen R."/>
            <person name="Davies R."/>
            <person name="Dyer P.S."/>
            <person name="Farman M.L."/>
            <person name="Fedorova N."/>
            <person name="Fedorova N.D."/>
            <person name="Feldblyum T.V."/>
            <person name="Fischer R."/>
            <person name="Fosker N."/>
            <person name="Fraser A."/>
            <person name="Garcia J.L."/>
            <person name="Garcia M.J."/>
            <person name="Goble A."/>
            <person name="Goldman G.H."/>
            <person name="Gomi K."/>
            <person name="Griffith-Jones S."/>
            <person name="Gwilliam R."/>
            <person name="Haas B.J."/>
            <person name="Haas H."/>
            <person name="Harris D.E."/>
            <person name="Horiuchi H."/>
            <person name="Huang J."/>
            <person name="Humphray S."/>
            <person name="Jimenez J."/>
            <person name="Keller N."/>
            <person name="Khouri H."/>
            <person name="Kitamoto K."/>
            <person name="Kobayashi T."/>
            <person name="Konzack S."/>
            <person name="Kulkarni R."/>
            <person name="Kumagai T."/>
            <person name="Lafton A."/>
            <person name="Latge J.-P."/>
            <person name="Li W."/>
            <person name="Lord A."/>
            <person name="Lu C."/>
            <person name="Majoros W.H."/>
            <person name="May G.S."/>
            <person name="Miller B.L."/>
            <person name="Mohamoud Y."/>
            <person name="Molina M."/>
            <person name="Monod M."/>
            <person name="Mouyna I."/>
            <person name="Mulligan S."/>
            <person name="Murphy L.D."/>
            <person name="O'Neil S."/>
            <person name="Paulsen I."/>
            <person name="Penalva M.A."/>
            <person name="Pertea M."/>
            <person name="Price C."/>
            <person name="Pritchard B.L."/>
            <person name="Quail M.A."/>
            <person name="Rabbinowitsch E."/>
            <person name="Rawlins N."/>
            <person name="Rajandream M.A."/>
            <person name="Reichard U."/>
            <person name="Renauld H."/>
            <person name="Robson G.D."/>
            <person name="Rodriguez de Cordoba S."/>
            <person name="Rodriguez-Pena J.M."/>
            <person name="Ronning C.M."/>
            <person name="Rutter S."/>
            <person name="Salzberg S.L."/>
            <person name="Sanchez M."/>
            <person name="Sanchez-Ferrero J.C."/>
            <person name="Saunders D."/>
            <person name="Seeger K."/>
            <person name="Squares R."/>
            <person name="Squares S."/>
            <person name="Takeuchi M."/>
            <person name="Tekaia F."/>
            <person name="Turner G."/>
            <person name="Vazquez de Aldana C.R."/>
            <person name="Weidman J."/>
            <person name="White O."/>
            <person name="Woodward J.R."/>
            <person name="Yu J.-H."/>
            <person name="Fraser C.M."/>
            <person name="Galagan J.E."/>
            <person name="Asai K."/>
            <person name="Machida M."/>
            <person name="Hall N."/>
            <person name="Barrell B.G."/>
            <person name="Denning D.W."/>
        </authorList>
    </citation>
    <scope>NUCLEOTIDE SEQUENCE [LARGE SCALE GENOMIC DNA]</scope>
    <source>
        <strain>ATCC MYA-4609 / CBS 101355 / FGSC A1100 / Af293</strain>
    </source>
</reference>